<evidence type="ECO:0000256" key="1">
    <source>
        <dbReference type="SAM" id="MobiDB-lite"/>
    </source>
</evidence>
<name>UL107_HCMVA</name>
<organismHost>
    <name type="scientific">Homo sapiens</name>
    <name type="common">Human</name>
    <dbReference type="NCBI Taxonomy" id="9606"/>
</organismHost>
<gene>
    <name type="primary">UL107</name>
</gene>
<feature type="chain" id="PRO_0000115346" description="Uncharacterized protein UL107">
    <location>
        <begin position="1"/>
        <end position="150"/>
    </location>
</feature>
<feature type="region of interest" description="Disordered" evidence="1">
    <location>
        <begin position="81"/>
        <end position="125"/>
    </location>
</feature>
<feature type="compositionally biased region" description="Polar residues" evidence="1">
    <location>
        <begin position="81"/>
        <end position="90"/>
    </location>
</feature>
<protein>
    <recommendedName>
        <fullName>Uncharacterized protein UL107</fullName>
    </recommendedName>
</protein>
<proteinExistence type="predicted"/>
<sequence length="150" mass="17373">KLPYSITVTYDHRTSPHIPFSSHIGKQNSFFSFLSRKKSMYHHITFCSVPATDGRARGQRPTGHFHLFFVVNRLLPRTRSTTKPSCSFAQPVTPRTREGAGVRGHRRRRRGSLSLIPWKTSNDKQKDDKRSLFCYMREIIAVGNFSKYML</sequence>
<accession>P16828</accession>
<organism>
    <name type="scientific">Human cytomegalovirus (strain AD169)</name>
    <name type="common">HHV-5</name>
    <name type="synonym">Human herpesvirus 5</name>
    <dbReference type="NCBI Taxonomy" id="10360"/>
    <lineage>
        <taxon>Viruses</taxon>
        <taxon>Duplodnaviria</taxon>
        <taxon>Heunggongvirae</taxon>
        <taxon>Peploviricota</taxon>
        <taxon>Herviviricetes</taxon>
        <taxon>Herpesvirales</taxon>
        <taxon>Orthoherpesviridae</taxon>
        <taxon>Betaherpesvirinae</taxon>
        <taxon>Cytomegalovirus</taxon>
        <taxon>Cytomegalovirus humanbeta5</taxon>
        <taxon>Human cytomegalovirus</taxon>
    </lineage>
</organism>
<reference key="1">
    <citation type="journal article" date="1990" name="Curr. Top. Microbiol. Immunol.">
        <title>Analysis of the protein-coding content of the sequence of human cytomegalovirus strain AD169.</title>
        <authorList>
            <person name="Chee M.S."/>
            <person name="Bankier A.T."/>
            <person name="Beck S."/>
            <person name="Bohni R."/>
            <person name="Brown C.M."/>
            <person name="Cerny R."/>
            <person name="Horsnell T."/>
            <person name="Hutchison C.A. III"/>
            <person name="Kouzarides T."/>
            <person name="Martignetti J.A."/>
            <person name="Preddie E."/>
            <person name="Satchwell S.C."/>
            <person name="Tomlinson P."/>
            <person name="Weston K.M."/>
            <person name="Barrell B.G."/>
        </authorList>
    </citation>
    <scope>NUCLEOTIDE SEQUENCE [LARGE SCALE GENOMIC DNA]</scope>
</reference>
<dbReference type="EMBL" id="X17403">
    <property type="protein sequence ID" value="CAA35343.1"/>
    <property type="molecule type" value="Genomic_DNA"/>
</dbReference>
<dbReference type="PIR" id="S09872">
    <property type="entry name" value="S09872"/>
</dbReference>
<dbReference type="Proteomes" id="UP000008991">
    <property type="component" value="Segment"/>
</dbReference>